<evidence type="ECO:0000250" key="1"/>
<evidence type="ECO:0000250" key="2">
    <source>
        <dbReference type="UniProtKB" id="P61922"/>
    </source>
</evidence>
<evidence type="ECO:0000250" key="3">
    <source>
        <dbReference type="UniProtKB" id="P80147"/>
    </source>
</evidence>
<evidence type="ECO:0000269" key="4">
    <source>
    </source>
</evidence>
<evidence type="ECO:0000269" key="5">
    <source>
    </source>
</evidence>
<evidence type="ECO:0000303" key="6">
    <source>
    </source>
</evidence>
<evidence type="ECO:0000305" key="7"/>
<evidence type="ECO:0000305" key="8">
    <source>
    </source>
</evidence>
<evidence type="ECO:0000305" key="9">
    <source>
    </source>
</evidence>
<evidence type="ECO:0000312" key="10">
    <source>
        <dbReference type="RGD" id="620948"/>
    </source>
</evidence>
<gene>
    <name evidence="10" type="primary">Abat</name>
    <name type="synonym">Gabat</name>
</gene>
<dbReference type="EC" id="2.6.1.19" evidence="4"/>
<dbReference type="EC" id="2.6.1.22" evidence="5"/>
<dbReference type="EMBL" id="U29701">
    <property type="protein sequence ID" value="AAA70415.1"/>
    <property type="molecule type" value="mRNA"/>
</dbReference>
<dbReference type="EMBL" id="D87839">
    <property type="protein sequence ID" value="BAA25570.1"/>
    <property type="molecule type" value="mRNA"/>
</dbReference>
<dbReference type="EMBL" id="BC081787">
    <property type="protein sequence ID" value="AAH81787.1"/>
    <property type="molecule type" value="mRNA"/>
</dbReference>
<dbReference type="PIR" id="I56502">
    <property type="entry name" value="I56502"/>
</dbReference>
<dbReference type="RefSeq" id="NP_112265.1">
    <property type="nucleotide sequence ID" value="NM_031003.2"/>
</dbReference>
<dbReference type="RefSeq" id="XP_006245822.1">
    <property type="nucleotide sequence ID" value="XM_006245760.5"/>
</dbReference>
<dbReference type="RefSeq" id="XP_063126013.1">
    <property type="nucleotide sequence ID" value="XM_063269943.1"/>
</dbReference>
<dbReference type="SMR" id="P50554"/>
<dbReference type="BioGRID" id="249532">
    <property type="interactions" value="1"/>
</dbReference>
<dbReference type="FunCoup" id="P50554">
    <property type="interactions" value="1891"/>
</dbReference>
<dbReference type="IntAct" id="P50554">
    <property type="interactions" value="1"/>
</dbReference>
<dbReference type="MINT" id="P50554"/>
<dbReference type="STRING" id="10116.ENSRNOP00000003633"/>
<dbReference type="BindingDB" id="P50554"/>
<dbReference type="ChEMBL" id="CHEMBL3148"/>
<dbReference type="DrugCentral" id="P50554"/>
<dbReference type="iPTMnet" id="P50554"/>
<dbReference type="PhosphoSitePlus" id="P50554"/>
<dbReference type="SwissPalm" id="P50554"/>
<dbReference type="jPOST" id="P50554"/>
<dbReference type="PaxDb" id="10116-ENSRNOP00000003633"/>
<dbReference type="Ensembl" id="ENSRNOT00000003633.5">
    <property type="protein sequence ID" value="ENSRNOP00000003633.2"/>
    <property type="gene ID" value="ENSRNOG00000002636.8"/>
</dbReference>
<dbReference type="GeneID" id="81632"/>
<dbReference type="KEGG" id="rno:81632"/>
<dbReference type="UCSC" id="RGD:620948">
    <property type="organism name" value="rat"/>
</dbReference>
<dbReference type="AGR" id="RGD:620948"/>
<dbReference type="CTD" id="18"/>
<dbReference type="RGD" id="620948">
    <property type="gene designation" value="Abat"/>
</dbReference>
<dbReference type="eggNOG" id="KOG1405">
    <property type="taxonomic scope" value="Eukaryota"/>
</dbReference>
<dbReference type="GeneTree" id="ENSGT00550000074885"/>
<dbReference type="HOGENOM" id="CLU_016922_12_1_1"/>
<dbReference type="InParanoid" id="P50554"/>
<dbReference type="OMA" id="GLMCAFD"/>
<dbReference type="OrthoDB" id="5419315at2759"/>
<dbReference type="PhylomeDB" id="P50554"/>
<dbReference type="TreeFam" id="TF105021"/>
<dbReference type="BRENDA" id="2.6.1.19">
    <property type="organism ID" value="5301"/>
</dbReference>
<dbReference type="Reactome" id="R-RNO-916853">
    <property type="pathway name" value="Degradation of GABA"/>
</dbReference>
<dbReference type="SABIO-RK" id="P50554"/>
<dbReference type="PRO" id="PR:P50554"/>
<dbReference type="Proteomes" id="UP000002494">
    <property type="component" value="Chromosome 10"/>
</dbReference>
<dbReference type="Bgee" id="ENSRNOG00000002636">
    <property type="expression patterns" value="Expressed in liver and 15 other cell types or tissues"/>
</dbReference>
<dbReference type="GO" id="GO:0032144">
    <property type="term" value="C:4-aminobutyrate transaminase complex"/>
    <property type="evidence" value="ECO:0000250"/>
    <property type="project" value="UniProtKB"/>
</dbReference>
<dbReference type="GO" id="GO:0005759">
    <property type="term" value="C:mitochondrial matrix"/>
    <property type="evidence" value="ECO:0000314"/>
    <property type="project" value="RGD"/>
</dbReference>
<dbReference type="GO" id="GO:0005739">
    <property type="term" value="C:mitochondrion"/>
    <property type="evidence" value="ECO:0000250"/>
    <property type="project" value="UniProtKB"/>
</dbReference>
<dbReference type="GO" id="GO:0047298">
    <property type="term" value="F:(S)-3-amino-2-methylpropionate transaminase activity"/>
    <property type="evidence" value="ECO:0007669"/>
    <property type="project" value="UniProtKB-EC"/>
</dbReference>
<dbReference type="GO" id="GO:0034386">
    <property type="term" value="F:4-aminobutyrate:2-oxoglutarate transaminase activity"/>
    <property type="evidence" value="ECO:0000314"/>
    <property type="project" value="RGD"/>
</dbReference>
<dbReference type="GO" id="GO:0042802">
    <property type="term" value="F:identical protein binding"/>
    <property type="evidence" value="ECO:0000250"/>
    <property type="project" value="UniProtKB"/>
</dbReference>
<dbReference type="GO" id="GO:0051536">
    <property type="term" value="F:iron-sulfur cluster binding"/>
    <property type="evidence" value="ECO:0007669"/>
    <property type="project" value="UniProtKB-KW"/>
</dbReference>
<dbReference type="GO" id="GO:0046872">
    <property type="term" value="F:metal ion binding"/>
    <property type="evidence" value="ECO:0007669"/>
    <property type="project" value="UniProtKB-KW"/>
</dbReference>
<dbReference type="GO" id="GO:0042803">
    <property type="term" value="F:protein homodimerization activity"/>
    <property type="evidence" value="ECO:0000266"/>
    <property type="project" value="RGD"/>
</dbReference>
<dbReference type="GO" id="GO:0030170">
    <property type="term" value="F:pyridoxal phosphate binding"/>
    <property type="evidence" value="ECO:0000250"/>
    <property type="project" value="UniProtKB"/>
</dbReference>
<dbReference type="GO" id="GO:0032145">
    <property type="term" value="F:succinate-semialdehyde dehydrogenase binding"/>
    <property type="evidence" value="ECO:0000250"/>
    <property type="project" value="UniProtKB"/>
</dbReference>
<dbReference type="GO" id="GO:0021549">
    <property type="term" value="P:cerebellum development"/>
    <property type="evidence" value="ECO:0000270"/>
    <property type="project" value="RGD"/>
</dbReference>
<dbReference type="GO" id="GO:0007620">
    <property type="term" value="P:copulation"/>
    <property type="evidence" value="ECO:0000315"/>
    <property type="project" value="RGD"/>
</dbReference>
<dbReference type="GO" id="GO:0035640">
    <property type="term" value="P:exploration behavior"/>
    <property type="evidence" value="ECO:0000315"/>
    <property type="project" value="RGD"/>
</dbReference>
<dbReference type="GO" id="GO:0009449">
    <property type="term" value="P:gamma-aminobutyric acid biosynthetic process"/>
    <property type="evidence" value="ECO:0000315"/>
    <property type="project" value="RGD"/>
</dbReference>
<dbReference type="GO" id="GO:0009450">
    <property type="term" value="P:gamma-aminobutyric acid catabolic process"/>
    <property type="evidence" value="ECO:0000266"/>
    <property type="project" value="RGD"/>
</dbReference>
<dbReference type="GO" id="GO:0009448">
    <property type="term" value="P:gamma-aminobutyric acid metabolic process"/>
    <property type="evidence" value="ECO:0000266"/>
    <property type="project" value="RGD"/>
</dbReference>
<dbReference type="GO" id="GO:0007626">
    <property type="term" value="P:locomotory behavior"/>
    <property type="evidence" value="ECO:0000315"/>
    <property type="project" value="RGD"/>
</dbReference>
<dbReference type="GO" id="GO:0045776">
    <property type="term" value="P:negative regulation of blood pressure"/>
    <property type="evidence" value="ECO:0000315"/>
    <property type="project" value="RGD"/>
</dbReference>
<dbReference type="GO" id="GO:0033602">
    <property type="term" value="P:negative regulation of dopamine secretion"/>
    <property type="evidence" value="ECO:0000315"/>
    <property type="project" value="RGD"/>
</dbReference>
<dbReference type="GO" id="GO:0014053">
    <property type="term" value="P:negative regulation of gamma-aminobutyric acid secretion"/>
    <property type="evidence" value="ECO:0000315"/>
    <property type="project" value="RGD"/>
</dbReference>
<dbReference type="GO" id="GO:0050877">
    <property type="term" value="P:nervous system process"/>
    <property type="evidence" value="ECO:0000250"/>
    <property type="project" value="UniProtKB"/>
</dbReference>
<dbReference type="GO" id="GO:1904450">
    <property type="term" value="P:positive regulation of aspartate secretion"/>
    <property type="evidence" value="ECO:0000315"/>
    <property type="project" value="RGD"/>
</dbReference>
<dbReference type="GO" id="GO:0045964">
    <property type="term" value="P:positive regulation of dopamine metabolic process"/>
    <property type="evidence" value="ECO:0000315"/>
    <property type="project" value="RGD"/>
</dbReference>
<dbReference type="GO" id="GO:0031652">
    <property type="term" value="P:positive regulation of heat generation"/>
    <property type="evidence" value="ECO:0000315"/>
    <property type="project" value="RGD"/>
</dbReference>
<dbReference type="GO" id="GO:0097151">
    <property type="term" value="P:positive regulation of inhibitory postsynaptic potential"/>
    <property type="evidence" value="ECO:0000315"/>
    <property type="project" value="RGD"/>
</dbReference>
<dbReference type="GO" id="GO:0032024">
    <property type="term" value="P:positive regulation of insulin secretion"/>
    <property type="evidence" value="ECO:0000315"/>
    <property type="project" value="RGD"/>
</dbReference>
<dbReference type="GO" id="GO:1902722">
    <property type="term" value="P:positive regulation of prolactin secretion"/>
    <property type="evidence" value="ECO:0000315"/>
    <property type="project" value="RGD"/>
</dbReference>
<dbReference type="GO" id="GO:0070474">
    <property type="term" value="P:positive regulation of uterine smooth muscle contraction"/>
    <property type="evidence" value="ECO:0000315"/>
    <property type="project" value="RGD"/>
</dbReference>
<dbReference type="GO" id="GO:0042220">
    <property type="term" value="P:response to cocaine"/>
    <property type="evidence" value="ECO:0000315"/>
    <property type="project" value="RGD"/>
</dbReference>
<dbReference type="GO" id="GO:0045471">
    <property type="term" value="P:response to ethanol"/>
    <property type="evidence" value="ECO:0000314"/>
    <property type="project" value="RGD"/>
</dbReference>
<dbReference type="GO" id="GO:0001666">
    <property type="term" value="P:response to hypoxia"/>
    <property type="evidence" value="ECO:0000315"/>
    <property type="project" value="RGD"/>
</dbReference>
<dbReference type="GO" id="GO:0010039">
    <property type="term" value="P:response to iron ion"/>
    <property type="evidence" value="ECO:0000314"/>
    <property type="project" value="RGD"/>
</dbReference>
<dbReference type="GO" id="GO:0035094">
    <property type="term" value="P:response to nicotine"/>
    <property type="evidence" value="ECO:0000315"/>
    <property type="project" value="RGD"/>
</dbReference>
<dbReference type="GO" id="GO:0009410">
    <property type="term" value="P:response to xenobiotic stimulus"/>
    <property type="evidence" value="ECO:0000314"/>
    <property type="project" value="RGD"/>
</dbReference>
<dbReference type="CDD" id="cd00610">
    <property type="entry name" value="OAT_like"/>
    <property type="match status" value="1"/>
</dbReference>
<dbReference type="FunFam" id="3.40.640.10:FF:000029">
    <property type="entry name" value="4-aminobutyrate aminotransferase, mitochondrial"/>
    <property type="match status" value="1"/>
</dbReference>
<dbReference type="FunFam" id="3.90.1150.10:FF:000191">
    <property type="entry name" value="4-aminobutyrate aminotransferase, mitochondrial"/>
    <property type="match status" value="2"/>
</dbReference>
<dbReference type="Gene3D" id="3.90.1150.10">
    <property type="entry name" value="Aspartate Aminotransferase, domain 1"/>
    <property type="match status" value="1"/>
</dbReference>
<dbReference type="Gene3D" id="3.40.640.10">
    <property type="entry name" value="Type I PLP-dependent aspartate aminotransferase-like (Major domain)"/>
    <property type="match status" value="1"/>
</dbReference>
<dbReference type="InterPro" id="IPR004631">
    <property type="entry name" value="4NH2But_aminotransferase_euk"/>
</dbReference>
<dbReference type="InterPro" id="IPR005814">
    <property type="entry name" value="Aminotrans_3"/>
</dbReference>
<dbReference type="InterPro" id="IPR049704">
    <property type="entry name" value="Aminotrans_3_PPA_site"/>
</dbReference>
<dbReference type="InterPro" id="IPR015424">
    <property type="entry name" value="PyrdxlP-dep_Trfase"/>
</dbReference>
<dbReference type="InterPro" id="IPR015421">
    <property type="entry name" value="PyrdxlP-dep_Trfase_major"/>
</dbReference>
<dbReference type="InterPro" id="IPR015422">
    <property type="entry name" value="PyrdxlP-dep_Trfase_small"/>
</dbReference>
<dbReference type="NCBIfam" id="TIGR00699">
    <property type="entry name" value="GABAtrns_euk"/>
    <property type="match status" value="1"/>
</dbReference>
<dbReference type="PANTHER" id="PTHR43206:SF1">
    <property type="entry name" value="4-AMINOBUTYRATE AMINOTRANSFERASE, MITOCHONDRIAL"/>
    <property type="match status" value="1"/>
</dbReference>
<dbReference type="PANTHER" id="PTHR43206">
    <property type="entry name" value="AMINOTRANSFERASE"/>
    <property type="match status" value="1"/>
</dbReference>
<dbReference type="Pfam" id="PF00202">
    <property type="entry name" value="Aminotran_3"/>
    <property type="match status" value="1"/>
</dbReference>
<dbReference type="PIRSF" id="PIRSF000521">
    <property type="entry name" value="Transaminase_4ab_Lys_Orn"/>
    <property type="match status" value="1"/>
</dbReference>
<dbReference type="SUPFAM" id="SSF53383">
    <property type="entry name" value="PLP-dependent transferases"/>
    <property type="match status" value="1"/>
</dbReference>
<dbReference type="PROSITE" id="PS00600">
    <property type="entry name" value="AA_TRANSFER_CLASS_3"/>
    <property type="match status" value="1"/>
</dbReference>
<protein>
    <recommendedName>
        <fullName>4-aminobutyrate aminotransferase, mitochondrial</fullName>
        <shortName evidence="6">beta-AlaAT I</shortName>
        <ecNumber evidence="4">2.6.1.19</ecNumber>
    </recommendedName>
    <alternativeName>
        <fullName>(S)-3-amino-2-methylpropionate transaminase</fullName>
        <ecNumber evidence="5">2.6.1.22</ecNumber>
    </alternativeName>
    <alternativeName>
        <fullName>GABA aminotransferase</fullName>
        <shortName>GABA-AT</shortName>
    </alternativeName>
    <alternativeName>
        <fullName>Gamma-amino-N-butyrate transaminase</fullName>
        <shortName>GABA transaminase</shortName>
        <shortName>GABA-T</shortName>
    </alternativeName>
    <alternativeName>
        <fullName>L-AIBAT</fullName>
    </alternativeName>
    <component>
        <recommendedName>
            <fullName evidence="6">4-aminobutyrate aminotransferase, brain isoform</fullName>
        </recommendedName>
    </component>
    <component>
        <recommendedName>
            <fullName evidence="6">4-aminobutyrate aminotransferase, liver isoform</fullName>
        </recommendedName>
    </component>
</protein>
<keyword id="KW-0007">Acetylation</keyword>
<keyword id="KW-0032">Aminotransferase</keyword>
<keyword id="KW-0903">Direct protein sequencing</keyword>
<keyword id="KW-1015">Disulfide bond</keyword>
<keyword id="KW-0408">Iron</keyword>
<keyword id="KW-0411">Iron-sulfur</keyword>
<keyword id="KW-0479">Metal-binding</keyword>
<keyword id="KW-0496">Mitochondrion</keyword>
<keyword id="KW-0531">Neurotransmitter degradation</keyword>
<keyword id="KW-0663">Pyridoxal phosphate</keyword>
<keyword id="KW-1185">Reference proteome</keyword>
<keyword id="KW-0808">Transferase</keyword>
<keyword id="KW-0809">Transit peptide</keyword>
<organism>
    <name type="scientific">Rattus norvegicus</name>
    <name type="common">Rat</name>
    <dbReference type="NCBI Taxonomy" id="10116"/>
    <lineage>
        <taxon>Eukaryota</taxon>
        <taxon>Metazoa</taxon>
        <taxon>Chordata</taxon>
        <taxon>Craniata</taxon>
        <taxon>Vertebrata</taxon>
        <taxon>Euteleostomi</taxon>
        <taxon>Mammalia</taxon>
        <taxon>Eutheria</taxon>
        <taxon>Euarchontoglires</taxon>
        <taxon>Glires</taxon>
        <taxon>Rodentia</taxon>
        <taxon>Myomorpha</taxon>
        <taxon>Muroidea</taxon>
        <taxon>Muridae</taxon>
        <taxon>Murinae</taxon>
        <taxon>Rattus</taxon>
    </lineage>
</organism>
<accession>P50554</accession>
<accession>O70539</accession>
<accession>Q66HM1</accession>
<feature type="transit peptide" description="Mitochondrion">
    <location>
        <begin position="1"/>
        <end position="27"/>
    </location>
</feature>
<feature type="chain" id="PRO_0000001252" description="4-aminobutyrate aminotransferase, brain isoform" evidence="6">
    <location>
        <begin position="28"/>
        <end position="500"/>
    </location>
</feature>
<feature type="chain" id="PRO_0000001253" description="4-aminobutyrate aminotransferase, liver isoform" evidence="6">
    <location>
        <begin position="35"/>
        <end position="500"/>
    </location>
</feature>
<feature type="binding site" evidence="3">
    <location>
        <position position="163"/>
    </location>
    <ligand>
        <name>[2Fe-2S] cluster</name>
        <dbReference type="ChEBI" id="CHEBI:190135"/>
        <note>ligand shared between dimeric partners</note>
    </ligand>
</feature>
<feature type="binding site" description="in other chain" evidence="3">
    <location>
        <begin position="164"/>
        <end position="165"/>
    </location>
    <ligand>
        <name>pyridoxal 5'-phosphate</name>
        <dbReference type="ChEBI" id="CHEBI:597326"/>
        <note>ligand shared between dimeric partners</note>
    </ligand>
</feature>
<feature type="binding site" evidence="3">
    <location>
        <position position="166"/>
    </location>
    <ligand>
        <name>[2Fe-2S] cluster</name>
        <dbReference type="ChEBI" id="CHEBI:190135"/>
        <note>ligand shared between dimeric partners</note>
    </ligand>
</feature>
<feature type="binding site" evidence="3">
    <location>
        <position position="220"/>
    </location>
    <ligand>
        <name>substrate</name>
    </ligand>
</feature>
<feature type="binding site" evidence="3">
    <location>
        <position position="381"/>
    </location>
    <ligand>
        <name>pyridoxal 5'-phosphate</name>
        <dbReference type="ChEBI" id="CHEBI:597326"/>
        <note>ligand shared between dimeric partners</note>
    </ligand>
</feature>
<feature type="modified residue" description="N6-succinyllysine" evidence="2">
    <location>
        <position position="231"/>
    </location>
</feature>
<feature type="modified residue" description="N6-acetyllysine; alternate" evidence="2">
    <location>
        <position position="252"/>
    </location>
</feature>
<feature type="modified residue" description="N6-succinyllysine; alternate" evidence="2">
    <location>
        <position position="252"/>
    </location>
</feature>
<feature type="modified residue" description="N6-acetyllysine" evidence="2">
    <location>
        <position position="279"/>
    </location>
</feature>
<feature type="modified residue" description="N6-acetyllysine" evidence="2">
    <location>
        <position position="318"/>
    </location>
</feature>
<feature type="modified residue" description="N6-(pyridoxal phosphate)lysine" evidence="3">
    <location>
        <position position="357"/>
    </location>
</feature>
<feature type="modified residue" description="N6-acetyllysine; alternate" evidence="2">
    <location>
        <position position="413"/>
    </location>
</feature>
<feature type="modified residue" description="N6-succinyllysine; alternate" evidence="2">
    <location>
        <position position="413"/>
    </location>
</feature>
<feature type="modified residue" description="N6-acetyllysine" evidence="2">
    <location>
        <position position="452"/>
    </location>
</feature>
<feature type="modified residue" description="N6-acetyllysine" evidence="2">
    <location>
        <position position="470"/>
    </location>
</feature>
<feature type="disulfide bond" description="Interchain" evidence="1">
    <location>
        <position position="321"/>
    </location>
</feature>
<feature type="sequence conflict" description="In Ref. 1; AAA70415." evidence="7" ref="1">
    <original>F</original>
    <variation>L</variation>
    <location>
        <position position="3"/>
    </location>
</feature>
<feature type="sequence conflict" description="In Ref. 1; AAA70415." evidence="7" ref="1">
    <original>S</original>
    <variation>T</variation>
    <location>
        <position position="25"/>
    </location>
</feature>
<feature type="sequence conflict" description="In Ref. 1; AAA70415." evidence="7" ref="1">
    <original>D</original>
    <variation>T</variation>
    <location>
        <position position="36"/>
    </location>
</feature>
<feature type="sequence conflict" description="In Ref. 1; AAA70415." evidence="7" ref="1">
    <original>PPENFVDKLRESLMSVAPKGMCQLITMACGSCSNEN</original>
    <variation>LQRTLWTSSGSPCSRWLPKACVSSSRWPAGPAPMRM</variation>
    <location>
        <begin position="135"/>
        <end position="170"/>
    </location>
</feature>
<feature type="sequence conflict" description="In Ref. 1; AAA70415." evidence="7" ref="1">
    <original>I</original>
    <variation>N</variation>
    <location>
        <position position="277"/>
    </location>
</feature>
<feature type="sequence conflict" description="In Ref. 1; AAA70415." evidence="7" ref="1">
    <original>Q</original>
    <variation>R</variation>
    <location>
        <position position="425"/>
    </location>
</feature>
<feature type="sequence conflict" description="In Ref. 2 and 3; BAA25570." evidence="7" ref="2 3">
    <original>E</original>
    <variation>K</variation>
    <location>
        <position position="447"/>
    </location>
</feature>
<feature type="sequence conflict" description="In Ref. 1; AAA70415." evidence="7" ref="1">
    <original>H</original>
    <variation>Q</variation>
    <location>
        <position position="486"/>
    </location>
</feature>
<proteinExistence type="evidence at protein level"/>
<comment type="function">
    <text evidence="4 5">Catalyzes the conversion of gamma-aminobutyrate and L-beta-aminoisobutyrate to succinate semialdehyde and methylmalonate semialdehyde, respectively (PubMed:10447691). Can also convert delta-aminovalerate and beta-alanine (PubMed:10447691).</text>
</comment>
<comment type="catalytic activity">
    <reaction evidence="4 5">
        <text>4-aminobutanoate + 2-oxoglutarate = succinate semialdehyde + L-glutamate</text>
        <dbReference type="Rhea" id="RHEA:23352"/>
        <dbReference type="ChEBI" id="CHEBI:16810"/>
        <dbReference type="ChEBI" id="CHEBI:29985"/>
        <dbReference type="ChEBI" id="CHEBI:57706"/>
        <dbReference type="ChEBI" id="CHEBI:59888"/>
        <dbReference type="EC" id="2.6.1.19"/>
    </reaction>
    <physiologicalReaction direction="left-to-right" evidence="8 9">
        <dbReference type="Rhea" id="RHEA:23353"/>
    </physiologicalReaction>
</comment>
<comment type="catalytic activity">
    <reaction evidence="5">
        <text>(S)-3-amino-2-methylpropanoate + 2-oxoglutarate = 2-methyl-3-oxopropanoate + L-glutamate</text>
        <dbReference type="Rhea" id="RHEA:13993"/>
        <dbReference type="ChEBI" id="CHEBI:16810"/>
        <dbReference type="ChEBI" id="CHEBI:29985"/>
        <dbReference type="ChEBI" id="CHEBI:57700"/>
        <dbReference type="ChEBI" id="CHEBI:58655"/>
        <dbReference type="EC" id="2.6.1.22"/>
    </reaction>
    <physiologicalReaction direction="left-to-right" evidence="9">
        <dbReference type="Rhea" id="RHEA:13994"/>
    </physiologicalReaction>
</comment>
<comment type="cofactor">
    <cofactor evidence="3">
        <name>pyridoxal 5'-phosphate</name>
        <dbReference type="ChEBI" id="CHEBI:597326"/>
    </cofactor>
    <cofactor evidence="3">
        <name>[2Fe-2S] cluster</name>
        <dbReference type="ChEBI" id="CHEBI:190135"/>
    </cofactor>
    <text evidence="3">Binds 1 [2Fe-2S] cluster per homodimer.</text>
</comment>
<comment type="biophysicochemical properties">
    <molecule>4-aminobutyrate aminotransferase, liver isoform</molecule>
    <kinetics>
        <KM evidence="4">1.6 mM for 4-aminobutanoate</KM>
        <KM evidence="4">5.3 mM for beta-alanine</KM>
        <Vmax evidence="4">0.83 umol/min/mg enzyme</Vmax>
    </kinetics>
</comment>
<comment type="biophysicochemical properties">
    <molecule>4-aminobutyrate aminotransferase, brain isoform</molecule>
    <kinetics>
        <KM evidence="4">1.6 mM for 4-aminobutanoate</KM>
        <KM evidence="4">6.1 mM for beta-alanine</KM>
        <Vmax evidence="4">1.0 umol/min/mg enzyme</Vmax>
    </kinetics>
</comment>
<comment type="subunit">
    <text>Homodimer; disulfide-linked.</text>
</comment>
<comment type="subcellular location">
    <subcellularLocation>
        <location evidence="8">Mitochondrion matrix</location>
    </subcellularLocation>
</comment>
<comment type="similarity">
    <text evidence="7">Belongs to the class-III pyridoxal-phosphate-dependent aminotransferase family.</text>
</comment>
<name>GABT_RAT</name>
<reference key="1">
    <citation type="journal article" date="1994" name="J. Neurochem.">
        <title>A rat brain cDNA encodes enzymatically active GABA transaminase and provides a molecular probe for GABA-catabolizing cells.</title>
        <authorList>
            <person name="Medina-Kauwe L.K."/>
            <person name="Tillakaratne N.J."/>
            <person name="Wu J.Y."/>
            <person name="Tobin A.J."/>
        </authorList>
    </citation>
    <scope>NUCLEOTIDE SEQUENCE [MRNA]</scope>
    <source>
        <tissue>Brain</tissue>
    </source>
</reference>
<reference key="2">
    <citation type="journal article" date="1999" name="Eur. J. Biochem.">
        <title>The mature size of rat 4-aminobutyrate aminotransferase is different in liver and brain.</title>
        <authorList>
            <person name="Kontani Y."/>
            <person name="Sakata S.F."/>
            <person name="Matsuda K."/>
            <person name="Ohyama T."/>
            <person name="Sano K."/>
            <person name="Tamaki N."/>
        </authorList>
    </citation>
    <scope>NUCLEOTIDE SEQUENCE [MRNA]</scope>
    <scope>PROTEIN SEQUENCE OF 35-54</scope>
    <scope>PROTEOLYTIC PROCESSING</scope>
    <scope>SUBCELLULAR LOCATION</scope>
    <source>
        <strain>Sprague-Dawley</strain>
        <tissue>Brain</tissue>
        <tissue>Liver</tissue>
    </source>
</reference>
<reference key="3">
    <citation type="journal article" date="2000" name="Methods Enzymol.">
        <title>Purification, properties, and sequencing of aminoisobutyrate aminotransferases from rat liver.</title>
        <authorList>
            <person name="Tamaki N."/>
            <person name="Sakata S.F."/>
            <person name="Matsuda K."/>
        </authorList>
    </citation>
    <scope>NUCLEOTIDE SEQUENCE [MRNA]</scope>
    <scope>CHARACTERIZATION</scope>
    <scope>FUNCTION</scope>
    <scope>CATALYTIC ACTIVITY</scope>
    <source>
        <strain>Sprague-Dawley</strain>
        <tissue>Liver</tissue>
    </source>
</reference>
<reference key="4">
    <citation type="journal article" date="2004" name="Genome Res.">
        <title>The status, quality, and expansion of the NIH full-length cDNA project: the Mammalian Gene Collection (MGC).</title>
        <authorList>
            <consortium name="The MGC Project Team"/>
        </authorList>
    </citation>
    <scope>NUCLEOTIDE SEQUENCE [LARGE SCALE MRNA]</scope>
    <source>
        <tissue>Kidney</tissue>
    </source>
</reference>
<reference key="5">
    <citation type="submission" date="2006-11" db="UniProtKB">
        <authorList>
            <person name="Lubec G."/>
            <person name="Afjehi-Sadat L."/>
        </authorList>
    </citation>
    <scope>PROTEIN SEQUENCE OF 253-268 AND 389-400</scope>
    <scope>IDENTIFICATION BY MASS SPECTROMETRY</scope>
    <source>
        <strain>Sprague-Dawley</strain>
        <tissue>Spinal cord</tissue>
    </source>
</reference>
<sequence length="500" mass="56456">MAFLLTTRRLVCSSQKNLHLFTPGSRYISQAAAKVDFEFDYDGPLMKTEVPGPRSQELMKQLNTIQNAEAVHFFCNYEESRGNYLVDVDGNRMLDLYSQISSVPIGYNHPALAKLVQQPQNASTFINRPALGILPPENFVDKLRESLMSVAPKGMCQLITMACGSCSNENAFKTIFMWYRSKERGQRGFSKEELETCMVNQSPGCPDYSILSFMGAFHGRTMGCLATTHSKAIHKIDIPSFDWPIAPFPRLKYPLEEFVTDNQQEEARCLEEVEDLIVKYRKKKRTVAGIIVEPIQSEGGDNHASDDFFRKLRDIARKHGCAFLVDEVQTGGGCTGKFWAHEHWGLDDPADVMSFSKKMMTGGFFHKEEFRPSAPYRIFNTWLGDPSKNLLLAEVINIIKREDLLNNVAHAGKTLLTGLLDLQAQYPQFVSRVRGRGTFCSFDTPDEAIRNKLILIARNKGVVLGGCGDKSIRFRPTLVFRDHHAHLFLNIFSGILADFK</sequence>